<accession>I1RHJ1</accession>
<dbReference type="EMBL" id="HG970333">
    <property type="protein sequence ID" value="CEF78012.1"/>
    <property type="molecule type" value="Genomic_DNA"/>
</dbReference>
<dbReference type="RefSeq" id="XP_011322503.1">
    <property type="nucleotide sequence ID" value="XM_011324201.1"/>
</dbReference>
<dbReference type="SMR" id="I1RHJ1"/>
<dbReference type="STRING" id="229533.I1RHJ1"/>
<dbReference type="KEGG" id="fgr:FGSG_03248"/>
<dbReference type="VEuPathDB" id="FungiDB:FGRAMPH1_01G12419"/>
<dbReference type="eggNOG" id="KOG0224">
    <property type="taxonomic scope" value="Eukaryota"/>
</dbReference>
<dbReference type="HOGENOM" id="CLU_020019_9_0_1"/>
<dbReference type="InParanoid" id="I1RHJ1"/>
<dbReference type="OrthoDB" id="59984at110618"/>
<dbReference type="Proteomes" id="UP000070720">
    <property type="component" value="Chromosome 2"/>
</dbReference>
<dbReference type="GO" id="GO:0005886">
    <property type="term" value="C:plasma membrane"/>
    <property type="evidence" value="ECO:0007669"/>
    <property type="project" value="TreeGrafter"/>
</dbReference>
<dbReference type="GO" id="GO:0015254">
    <property type="term" value="F:glycerol channel activity"/>
    <property type="evidence" value="ECO:0007669"/>
    <property type="project" value="TreeGrafter"/>
</dbReference>
<dbReference type="GO" id="GO:0015250">
    <property type="term" value="F:water channel activity"/>
    <property type="evidence" value="ECO:0007669"/>
    <property type="project" value="TreeGrafter"/>
</dbReference>
<dbReference type="CDD" id="cd00333">
    <property type="entry name" value="MIP"/>
    <property type="match status" value="1"/>
</dbReference>
<dbReference type="FunFam" id="1.20.1080.10:FF:000027">
    <property type="entry name" value="MIP aquaporin"/>
    <property type="match status" value="1"/>
</dbReference>
<dbReference type="Gene3D" id="1.20.1080.10">
    <property type="entry name" value="Glycerol uptake facilitator protein"/>
    <property type="match status" value="1"/>
</dbReference>
<dbReference type="InterPro" id="IPR023271">
    <property type="entry name" value="Aquaporin-like"/>
</dbReference>
<dbReference type="InterPro" id="IPR000425">
    <property type="entry name" value="MIP"/>
</dbReference>
<dbReference type="InterPro" id="IPR050363">
    <property type="entry name" value="MIP/Aquaporin"/>
</dbReference>
<dbReference type="InterPro" id="IPR022357">
    <property type="entry name" value="MIP_CS"/>
</dbReference>
<dbReference type="NCBIfam" id="TIGR00861">
    <property type="entry name" value="MIP"/>
    <property type="match status" value="1"/>
</dbReference>
<dbReference type="PANTHER" id="PTHR43829">
    <property type="entry name" value="AQUAPORIN OR AQUAGLYCEROPORIN RELATED"/>
    <property type="match status" value="1"/>
</dbReference>
<dbReference type="PANTHER" id="PTHR43829:SF9">
    <property type="entry name" value="AQUAPORIN-9"/>
    <property type="match status" value="1"/>
</dbReference>
<dbReference type="Pfam" id="PF00230">
    <property type="entry name" value="MIP"/>
    <property type="match status" value="1"/>
</dbReference>
<dbReference type="PRINTS" id="PR02019">
    <property type="entry name" value="AQUAPORIN7"/>
</dbReference>
<dbReference type="PRINTS" id="PR00783">
    <property type="entry name" value="MINTRINSICP"/>
</dbReference>
<dbReference type="SUPFAM" id="SSF81338">
    <property type="entry name" value="Aquaporin-like"/>
    <property type="match status" value="1"/>
</dbReference>
<dbReference type="PROSITE" id="PS00221">
    <property type="entry name" value="MIP"/>
    <property type="match status" value="1"/>
</dbReference>
<gene>
    <name evidence="5" type="primary">FgAQP2</name>
    <name type="ORF">FG03248</name>
    <name type="ORF">FGRAMPH1_01T12419</name>
</gene>
<organism>
    <name type="scientific">Gibberella zeae (strain ATCC MYA-4620 / CBS 123657 / FGSC 9075 / NRRL 31084 / PH-1)</name>
    <name type="common">Wheat head blight fungus</name>
    <name type="synonym">Fusarium graminearum</name>
    <dbReference type="NCBI Taxonomy" id="229533"/>
    <lineage>
        <taxon>Eukaryota</taxon>
        <taxon>Fungi</taxon>
        <taxon>Dikarya</taxon>
        <taxon>Ascomycota</taxon>
        <taxon>Pezizomycotina</taxon>
        <taxon>Sordariomycetes</taxon>
        <taxon>Hypocreomycetidae</taxon>
        <taxon>Hypocreales</taxon>
        <taxon>Nectriaceae</taxon>
        <taxon>Fusarium</taxon>
    </lineage>
</organism>
<sequence>MPISTINDSISESSVHKSSIPTKVEMSQNEKYSEAPSEAPTIPPPPEQYAWSRIRENCQDAFSEFFGTFVLLLFGDGVVAQVVLSRGTKGDYQSISWGWGLGVMLGVYVGGKSGGHLNPAVTLANCLFRGHPWRKFPIYAVAQVLGAMAAAAVVYGNYKSAIDAYEGGPGIRTVIGENATAGVFCTYPAEFMTRTGMFFSEFIASTILQFVIFAMADSANIGAGPLMPLGLFFLIFGIGACFGWETGYAINLARDFGPRLVSYMLGYGSEVWSAGGYYFWIPMVAPFFGCAFGGFLYDVFIYTGPSPINTPGMGFGRLVSPRRSTWSNTYNANSPV</sequence>
<protein>
    <recommendedName>
        <fullName evidence="5">Probable aquaglyceroporin-2</fullName>
    </recommendedName>
</protein>
<evidence type="ECO:0000255" key="1"/>
<evidence type="ECO:0000255" key="2">
    <source>
        <dbReference type="PROSITE-ProRule" id="PRU00498"/>
    </source>
</evidence>
<evidence type="ECO:0000256" key="3">
    <source>
        <dbReference type="SAM" id="MobiDB-lite"/>
    </source>
</evidence>
<evidence type="ECO:0000269" key="4">
    <source>
    </source>
</evidence>
<evidence type="ECO:0000303" key="5">
    <source>
    </source>
</evidence>
<evidence type="ECO:0000305" key="6"/>
<evidence type="ECO:0000305" key="7">
    <source>
    </source>
</evidence>
<reference key="1">
    <citation type="journal article" date="2007" name="Science">
        <title>The Fusarium graminearum genome reveals a link between localized polymorphism and pathogen specialization.</title>
        <authorList>
            <person name="Cuomo C.A."/>
            <person name="Gueldener U."/>
            <person name="Xu J.-R."/>
            <person name="Trail F."/>
            <person name="Turgeon B.G."/>
            <person name="Di Pietro A."/>
            <person name="Walton J.D."/>
            <person name="Ma L.-J."/>
            <person name="Baker S.E."/>
            <person name="Rep M."/>
            <person name="Adam G."/>
            <person name="Antoniw J."/>
            <person name="Baldwin T."/>
            <person name="Calvo S.E."/>
            <person name="Chang Y.-L."/>
            <person name="DeCaprio D."/>
            <person name="Gale L.R."/>
            <person name="Gnerre S."/>
            <person name="Goswami R.S."/>
            <person name="Hammond-Kosack K."/>
            <person name="Harris L.J."/>
            <person name="Hilburn K."/>
            <person name="Kennell J.C."/>
            <person name="Kroken S."/>
            <person name="Magnuson J.K."/>
            <person name="Mannhaupt G."/>
            <person name="Mauceli E.W."/>
            <person name="Mewes H.-W."/>
            <person name="Mitterbauer R."/>
            <person name="Muehlbauer G."/>
            <person name="Muensterkoetter M."/>
            <person name="Nelson D."/>
            <person name="O'Donnell K."/>
            <person name="Ouellet T."/>
            <person name="Qi W."/>
            <person name="Quesneville H."/>
            <person name="Roncero M.I.G."/>
            <person name="Seong K.-Y."/>
            <person name="Tetko I.V."/>
            <person name="Urban M."/>
            <person name="Waalwijk C."/>
            <person name="Ward T.J."/>
            <person name="Yao J."/>
            <person name="Birren B.W."/>
            <person name="Kistler H.C."/>
        </authorList>
    </citation>
    <scope>NUCLEOTIDE SEQUENCE [LARGE SCALE GENOMIC DNA]</scope>
    <source>
        <strain>ATCC MYA-4620 / CBS 123657 / FGSC 9075 / NRRL 31084 / PH-1</strain>
    </source>
</reference>
<reference key="2">
    <citation type="journal article" date="2010" name="Nature">
        <title>Comparative genomics reveals mobile pathogenicity chromosomes in Fusarium.</title>
        <authorList>
            <person name="Ma L.-J."/>
            <person name="van der Does H.C."/>
            <person name="Borkovich K.A."/>
            <person name="Coleman J.J."/>
            <person name="Daboussi M.-J."/>
            <person name="Di Pietro A."/>
            <person name="Dufresne M."/>
            <person name="Freitag M."/>
            <person name="Grabherr M."/>
            <person name="Henrissat B."/>
            <person name="Houterman P.M."/>
            <person name="Kang S."/>
            <person name="Shim W.-B."/>
            <person name="Woloshuk C."/>
            <person name="Xie X."/>
            <person name="Xu J.-R."/>
            <person name="Antoniw J."/>
            <person name="Baker S.E."/>
            <person name="Bluhm B.H."/>
            <person name="Breakspear A."/>
            <person name="Brown D.W."/>
            <person name="Butchko R.A.E."/>
            <person name="Chapman S."/>
            <person name="Coulson R."/>
            <person name="Coutinho P.M."/>
            <person name="Danchin E.G.J."/>
            <person name="Diener A."/>
            <person name="Gale L.R."/>
            <person name="Gardiner D.M."/>
            <person name="Goff S."/>
            <person name="Hammond-Kosack K.E."/>
            <person name="Hilburn K."/>
            <person name="Hua-Van A."/>
            <person name="Jonkers W."/>
            <person name="Kazan K."/>
            <person name="Kodira C.D."/>
            <person name="Koehrsen M."/>
            <person name="Kumar L."/>
            <person name="Lee Y.-H."/>
            <person name="Li L."/>
            <person name="Manners J.M."/>
            <person name="Miranda-Saavedra D."/>
            <person name="Mukherjee M."/>
            <person name="Park G."/>
            <person name="Park J."/>
            <person name="Park S.-Y."/>
            <person name="Proctor R.H."/>
            <person name="Regev A."/>
            <person name="Ruiz-Roldan M.C."/>
            <person name="Sain D."/>
            <person name="Sakthikumar S."/>
            <person name="Sykes S."/>
            <person name="Schwartz D.C."/>
            <person name="Turgeon B.G."/>
            <person name="Wapinski I."/>
            <person name="Yoder O."/>
            <person name="Young S."/>
            <person name="Zeng Q."/>
            <person name="Zhou S."/>
            <person name="Galagan J."/>
            <person name="Cuomo C.A."/>
            <person name="Kistler H.C."/>
            <person name="Rep M."/>
        </authorList>
    </citation>
    <scope>GENOME REANNOTATION</scope>
    <source>
        <strain>ATCC MYA-4620 / CBS 123657 / FGSC 9075 / NRRL 31084 / PH-1</strain>
    </source>
</reference>
<reference key="3">
    <citation type="journal article" date="2015" name="BMC Genomics">
        <title>The completed genome sequence of the pathogenic ascomycete fungus Fusarium graminearum.</title>
        <authorList>
            <person name="King R."/>
            <person name="Urban M."/>
            <person name="Hammond-Kosack M.C.U."/>
            <person name="Hassani-Pak K."/>
            <person name="Hammond-Kosack K.E."/>
        </authorList>
    </citation>
    <scope>NUCLEOTIDE SEQUENCE [LARGE SCALE GENOMIC DNA]</scope>
    <source>
        <strain>ATCC MYA-4620 / CBS 123657 / FGSC 9075 / NRRL 31084 / PH-1</strain>
    </source>
</reference>
<reference key="4">
    <citation type="journal article" date="2018" name="Curr. Genet.">
        <title>Aquaporin1 regulates development, secondary metabolism and stress responses in Fusarium graminearum.</title>
        <authorList>
            <person name="Ding M."/>
            <person name="Li J."/>
            <person name="Fan X."/>
            <person name="He F."/>
            <person name="Yu X."/>
            <person name="Chen L."/>
            <person name="Zou S."/>
            <person name="Liang Y."/>
            <person name="Yu J."/>
        </authorList>
    </citation>
    <scope>IDENTIFICATION</scope>
    <scope>DISRUPTION PHENOTYPE</scope>
    <scope>DOMAIN</scope>
</reference>
<keyword id="KW-0325">Glycoprotein</keyword>
<keyword id="KW-0472">Membrane</keyword>
<keyword id="KW-1185">Reference proteome</keyword>
<keyword id="KW-0677">Repeat</keyword>
<keyword id="KW-0812">Transmembrane</keyword>
<keyword id="KW-1133">Transmembrane helix</keyword>
<keyword id="KW-0813">Transport</keyword>
<feature type="chain" id="PRO_0000457432" description="Probable aquaglyceroporin-2">
    <location>
        <begin position="1"/>
        <end position="336"/>
    </location>
</feature>
<feature type="topological domain" description="Cytoplasmic" evidence="6">
    <location>
        <begin position="1"/>
        <end position="64"/>
    </location>
</feature>
<feature type="transmembrane region" description="Helical" evidence="1">
    <location>
        <begin position="65"/>
        <end position="85"/>
    </location>
</feature>
<feature type="topological domain" description="Extracellular" evidence="6">
    <location>
        <begin position="86"/>
        <end position="94"/>
    </location>
</feature>
<feature type="transmembrane region" description="Helical" evidence="1">
    <location>
        <begin position="95"/>
        <end position="115"/>
    </location>
</feature>
<feature type="topological domain" description="Cytoplasmic" evidence="6">
    <location>
        <begin position="116"/>
        <end position="135"/>
    </location>
</feature>
<feature type="transmembrane region" description="Helical" evidence="1">
    <location>
        <begin position="136"/>
        <end position="156"/>
    </location>
</feature>
<feature type="topological domain" description="Extracellular" evidence="6">
    <location>
        <begin position="157"/>
        <end position="195"/>
    </location>
</feature>
<feature type="transmembrane region" description="Helical" evidence="1">
    <location>
        <begin position="196"/>
        <end position="216"/>
    </location>
</feature>
<feature type="topological domain" description="Cytoplasmic" evidence="6">
    <location>
        <begin position="217"/>
        <end position="223"/>
    </location>
</feature>
<feature type="transmembrane region" description="Helical" evidence="1">
    <location>
        <begin position="224"/>
        <end position="244"/>
    </location>
</feature>
<feature type="topological domain" description="Extracellular" evidence="6">
    <location>
        <begin position="245"/>
        <end position="280"/>
    </location>
</feature>
<feature type="transmembrane region" description="Helical" evidence="1">
    <location>
        <begin position="281"/>
        <end position="301"/>
    </location>
</feature>
<feature type="topological domain" description="Cytoplasmic" evidence="6">
    <location>
        <begin position="302"/>
        <end position="336"/>
    </location>
</feature>
<feature type="region of interest" description="Disordered" evidence="3">
    <location>
        <begin position="1"/>
        <end position="46"/>
    </location>
</feature>
<feature type="short sequence motif" description="NPA 1" evidence="7">
    <location>
        <begin position="118"/>
        <end position="120"/>
    </location>
</feature>
<feature type="short sequence motif" description="NPA 2" evidence="7">
    <location>
        <begin position="251"/>
        <end position="253"/>
    </location>
</feature>
<feature type="compositionally biased region" description="Low complexity" evidence="3">
    <location>
        <begin position="9"/>
        <end position="19"/>
    </location>
</feature>
<feature type="glycosylation site" description="N-linked (GlcNAc...) asparagine" evidence="2">
    <location>
        <position position="178"/>
    </location>
</feature>
<comment type="function">
    <text evidence="7">Probable water/glycerol channel that may have redundant functions with FgAQP4.</text>
</comment>
<comment type="catalytic activity">
    <reaction evidence="7">
        <text>H2O(in) = H2O(out)</text>
        <dbReference type="Rhea" id="RHEA:29667"/>
        <dbReference type="ChEBI" id="CHEBI:15377"/>
    </reaction>
</comment>
<comment type="catalytic activity">
    <reaction evidence="7">
        <text>glycerol(in) = glycerol(out)</text>
        <dbReference type="Rhea" id="RHEA:29675"/>
        <dbReference type="ChEBI" id="CHEBI:17754"/>
    </reaction>
</comment>
<comment type="subcellular location">
    <subcellularLocation>
        <location evidence="1">Membrane</location>
        <topology evidence="1">Multi-pass membrane protein</topology>
    </subcellularLocation>
</comment>
<comment type="domain">
    <text evidence="7">Aquaporins contain two tandem repeats each containing three membrane-spanning domains and a pore-forming loop with the signature motif Asn-Pro-Ala (NPA) (Probable). FgAQP2 has NPA/NLA motifs which is in accordance with the fungal aquaporins (NPx and NxA) (Probable).</text>
</comment>
<comment type="disruption phenotype">
    <text evidence="4">Leads to no variable phenotypes.</text>
</comment>
<comment type="similarity">
    <text evidence="6">Belongs to the MIP/aquaporin (TC 1.A.8) family.</text>
</comment>
<name>AQP2_GIBZE</name>
<proteinExistence type="inferred from homology"/>